<reference key="1">
    <citation type="journal article" date="2010" name="PLoS ONE">
        <title>Genome sequence of Cronobacter sakazakii BAA-894 and comparative genomic hybridization analysis with other Cronobacter species.</title>
        <authorList>
            <person name="Kucerova E."/>
            <person name="Clifton S.W."/>
            <person name="Xia X.Q."/>
            <person name="Long F."/>
            <person name="Porwollik S."/>
            <person name="Fulton L."/>
            <person name="Fronick C."/>
            <person name="Minx P."/>
            <person name="Kyung K."/>
            <person name="Warren W."/>
            <person name="Fulton R."/>
            <person name="Feng D."/>
            <person name="Wollam A."/>
            <person name="Shah N."/>
            <person name="Bhonagiri V."/>
            <person name="Nash W.E."/>
            <person name="Hallsworth-Pepin K."/>
            <person name="Wilson R.K."/>
            <person name="McClelland M."/>
            <person name="Forsythe S.J."/>
        </authorList>
    </citation>
    <scope>NUCLEOTIDE SEQUENCE [LARGE SCALE GENOMIC DNA]</scope>
    <source>
        <strain>ATCC BAA-894</strain>
    </source>
</reference>
<dbReference type="EMBL" id="CP000783">
    <property type="protein sequence ID" value="ABU76640.1"/>
    <property type="molecule type" value="Genomic_DNA"/>
</dbReference>
<dbReference type="RefSeq" id="WP_004384824.1">
    <property type="nucleotide sequence ID" value="NC_009778.1"/>
</dbReference>
<dbReference type="SMR" id="A7MEA2"/>
<dbReference type="GeneID" id="56730234"/>
<dbReference type="KEGG" id="esa:ESA_01380"/>
<dbReference type="HOGENOM" id="CLU_087936_0_0_6"/>
<dbReference type="Proteomes" id="UP000000260">
    <property type="component" value="Chromosome"/>
</dbReference>
<dbReference type="GO" id="GO:0005737">
    <property type="term" value="C:cytoplasm"/>
    <property type="evidence" value="ECO:0007669"/>
    <property type="project" value="UniProtKB-SubCell"/>
</dbReference>
<dbReference type="GO" id="GO:0009379">
    <property type="term" value="C:Holliday junction helicase complex"/>
    <property type="evidence" value="ECO:0007669"/>
    <property type="project" value="InterPro"/>
</dbReference>
<dbReference type="GO" id="GO:0048476">
    <property type="term" value="C:Holliday junction resolvase complex"/>
    <property type="evidence" value="ECO:0007669"/>
    <property type="project" value="UniProtKB-UniRule"/>
</dbReference>
<dbReference type="GO" id="GO:0005524">
    <property type="term" value="F:ATP binding"/>
    <property type="evidence" value="ECO:0007669"/>
    <property type="project" value="InterPro"/>
</dbReference>
<dbReference type="GO" id="GO:0000400">
    <property type="term" value="F:four-way junction DNA binding"/>
    <property type="evidence" value="ECO:0007669"/>
    <property type="project" value="UniProtKB-UniRule"/>
</dbReference>
<dbReference type="GO" id="GO:0009378">
    <property type="term" value="F:four-way junction helicase activity"/>
    <property type="evidence" value="ECO:0007669"/>
    <property type="project" value="InterPro"/>
</dbReference>
<dbReference type="GO" id="GO:0006310">
    <property type="term" value="P:DNA recombination"/>
    <property type="evidence" value="ECO:0007669"/>
    <property type="project" value="UniProtKB-UniRule"/>
</dbReference>
<dbReference type="GO" id="GO:0006281">
    <property type="term" value="P:DNA repair"/>
    <property type="evidence" value="ECO:0007669"/>
    <property type="project" value="UniProtKB-UniRule"/>
</dbReference>
<dbReference type="CDD" id="cd14332">
    <property type="entry name" value="UBA_RuvA_C"/>
    <property type="match status" value="1"/>
</dbReference>
<dbReference type="FunFam" id="1.10.150.20:FF:000012">
    <property type="entry name" value="Holliday junction ATP-dependent DNA helicase RuvA"/>
    <property type="match status" value="1"/>
</dbReference>
<dbReference type="FunFam" id="1.10.8.10:FF:000008">
    <property type="entry name" value="Holliday junction ATP-dependent DNA helicase RuvA"/>
    <property type="match status" value="1"/>
</dbReference>
<dbReference type="FunFam" id="2.40.50.140:FF:000083">
    <property type="entry name" value="Holliday junction ATP-dependent DNA helicase RuvA"/>
    <property type="match status" value="1"/>
</dbReference>
<dbReference type="Gene3D" id="1.10.150.20">
    <property type="entry name" value="5' to 3' exonuclease, C-terminal subdomain"/>
    <property type="match status" value="1"/>
</dbReference>
<dbReference type="Gene3D" id="1.10.8.10">
    <property type="entry name" value="DNA helicase RuvA subunit, C-terminal domain"/>
    <property type="match status" value="1"/>
</dbReference>
<dbReference type="Gene3D" id="2.40.50.140">
    <property type="entry name" value="Nucleic acid-binding proteins"/>
    <property type="match status" value="1"/>
</dbReference>
<dbReference type="HAMAP" id="MF_00031">
    <property type="entry name" value="DNA_HJ_migration_RuvA"/>
    <property type="match status" value="1"/>
</dbReference>
<dbReference type="InterPro" id="IPR013849">
    <property type="entry name" value="DNA_helicase_Holl-junc_RuvA_I"/>
</dbReference>
<dbReference type="InterPro" id="IPR003583">
    <property type="entry name" value="Hlx-hairpin-Hlx_DNA-bd_motif"/>
</dbReference>
<dbReference type="InterPro" id="IPR012340">
    <property type="entry name" value="NA-bd_OB-fold"/>
</dbReference>
<dbReference type="InterPro" id="IPR000085">
    <property type="entry name" value="RuvA"/>
</dbReference>
<dbReference type="InterPro" id="IPR010994">
    <property type="entry name" value="RuvA_2-like"/>
</dbReference>
<dbReference type="InterPro" id="IPR011114">
    <property type="entry name" value="RuvA_C"/>
</dbReference>
<dbReference type="InterPro" id="IPR036267">
    <property type="entry name" value="RuvA_C_sf"/>
</dbReference>
<dbReference type="NCBIfam" id="TIGR00084">
    <property type="entry name" value="ruvA"/>
    <property type="match status" value="1"/>
</dbReference>
<dbReference type="Pfam" id="PF14520">
    <property type="entry name" value="HHH_5"/>
    <property type="match status" value="1"/>
</dbReference>
<dbReference type="Pfam" id="PF07499">
    <property type="entry name" value="RuvA_C"/>
    <property type="match status" value="1"/>
</dbReference>
<dbReference type="Pfam" id="PF01330">
    <property type="entry name" value="RuvA_N"/>
    <property type="match status" value="1"/>
</dbReference>
<dbReference type="SMART" id="SM00278">
    <property type="entry name" value="HhH1"/>
    <property type="match status" value="2"/>
</dbReference>
<dbReference type="SUPFAM" id="SSF46929">
    <property type="entry name" value="DNA helicase RuvA subunit, C-terminal domain"/>
    <property type="match status" value="1"/>
</dbReference>
<dbReference type="SUPFAM" id="SSF50249">
    <property type="entry name" value="Nucleic acid-binding proteins"/>
    <property type="match status" value="1"/>
</dbReference>
<dbReference type="SUPFAM" id="SSF47781">
    <property type="entry name" value="RuvA domain 2-like"/>
    <property type="match status" value="1"/>
</dbReference>
<sequence>MIGRLRGIVLEKQPPLVLLEAGGVGYEVHMPMTCFYELPETGKEAVVFTHFVVREDAQLLFGFNNKQERTLFRELIKVNGVGPKLALAILSGMSAQQFVNAVEREEPAALVKLPGIGKKTAERLVVEMKDRFKGLHGDLFTPAADLVLTSPASPAVDDAEAEAVAALVSLGYKPQEASRMVSKVAQADASSETLIREALRAAL</sequence>
<gene>
    <name evidence="1" type="primary">ruvA</name>
    <name type="ordered locus">ESA_01380</name>
</gene>
<organism>
    <name type="scientific">Cronobacter sakazakii (strain ATCC BAA-894)</name>
    <name type="common">Enterobacter sakazakii</name>
    <dbReference type="NCBI Taxonomy" id="290339"/>
    <lineage>
        <taxon>Bacteria</taxon>
        <taxon>Pseudomonadati</taxon>
        <taxon>Pseudomonadota</taxon>
        <taxon>Gammaproteobacteria</taxon>
        <taxon>Enterobacterales</taxon>
        <taxon>Enterobacteriaceae</taxon>
        <taxon>Cronobacter</taxon>
    </lineage>
</organism>
<accession>A7MEA2</accession>
<protein>
    <recommendedName>
        <fullName evidence="1">Holliday junction branch migration complex subunit RuvA</fullName>
    </recommendedName>
</protein>
<keyword id="KW-0963">Cytoplasm</keyword>
<keyword id="KW-0227">DNA damage</keyword>
<keyword id="KW-0233">DNA recombination</keyword>
<keyword id="KW-0234">DNA repair</keyword>
<keyword id="KW-0238">DNA-binding</keyword>
<keyword id="KW-1185">Reference proteome</keyword>
<name>RUVA_CROS8</name>
<evidence type="ECO:0000255" key="1">
    <source>
        <dbReference type="HAMAP-Rule" id="MF_00031"/>
    </source>
</evidence>
<comment type="function">
    <text evidence="1">The RuvA-RuvB-RuvC complex processes Holliday junction (HJ) DNA during genetic recombination and DNA repair, while the RuvA-RuvB complex plays an important role in the rescue of blocked DNA replication forks via replication fork reversal (RFR). RuvA specifically binds to HJ cruciform DNA, conferring on it an open structure. The RuvB hexamer acts as an ATP-dependent pump, pulling dsDNA into and through the RuvAB complex. HJ branch migration allows RuvC to scan DNA until it finds its consensus sequence, where it cleaves and resolves the cruciform DNA.</text>
</comment>
<comment type="subunit">
    <text evidence="1">Homotetramer. Forms an RuvA(8)-RuvB(12)-Holliday junction (HJ) complex. HJ DNA is sandwiched between 2 RuvA tetramers; dsDNA enters through RuvA and exits via RuvB. An RuvB hexamer assembles on each DNA strand where it exits the tetramer. Each RuvB hexamer is contacted by two RuvA subunits (via domain III) on 2 adjacent RuvB subunits; this complex drives branch migration. In the full resolvosome a probable DNA-RuvA(4)-RuvB(12)-RuvC(2) complex forms which resolves the HJ.</text>
</comment>
<comment type="subcellular location">
    <subcellularLocation>
        <location evidence="1">Cytoplasm</location>
    </subcellularLocation>
</comment>
<comment type="domain">
    <text evidence="1">Has three domains with a flexible linker between the domains II and III and assumes an 'L' shape. Domain III is highly mobile and contacts RuvB.</text>
</comment>
<comment type="similarity">
    <text evidence="1">Belongs to the RuvA family.</text>
</comment>
<proteinExistence type="inferred from homology"/>
<feature type="chain" id="PRO_1000002446" description="Holliday junction branch migration complex subunit RuvA">
    <location>
        <begin position="1"/>
        <end position="203"/>
    </location>
</feature>
<feature type="region of interest" description="Domain I" evidence="1">
    <location>
        <begin position="1"/>
        <end position="64"/>
    </location>
</feature>
<feature type="region of interest" description="Domain II" evidence="1">
    <location>
        <begin position="65"/>
        <end position="142"/>
    </location>
</feature>
<feature type="region of interest" description="Flexible linker" evidence="1">
    <location>
        <begin position="143"/>
        <end position="154"/>
    </location>
</feature>
<feature type="region of interest" description="Domain III" evidence="1">
    <location>
        <begin position="155"/>
        <end position="203"/>
    </location>
</feature>